<keyword id="KW-0030">Aminoacyl-tRNA synthetase</keyword>
<keyword id="KW-0067">ATP-binding</keyword>
<keyword id="KW-0963">Cytoplasm</keyword>
<keyword id="KW-0436">Ligase</keyword>
<keyword id="KW-0479">Metal-binding</keyword>
<keyword id="KW-0547">Nucleotide-binding</keyword>
<keyword id="KW-0648">Protein biosynthesis</keyword>
<keyword id="KW-0862">Zinc</keyword>
<feature type="chain" id="PRO_0000159376" description="Cysteine--tRNA ligase">
    <location>
        <begin position="1"/>
        <end position="475"/>
    </location>
</feature>
<feature type="short sequence motif" description="'HIGH' region">
    <location>
        <begin position="30"/>
        <end position="40"/>
    </location>
</feature>
<feature type="short sequence motif" description="'KMSKS' region">
    <location>
        <begin position="270"/>
        <end position="274"/>
    </location>
</feature>
<feature type="binding site" evidence="1">
    <location>
        <position position="28"/>
    </location>
    <ligand>
        <name>Zn(2+)</name>
        <dbReference type="ChEBI" id="CHEBI:29105"/>
    </ligand>
</feature>
<feature type="binding site" evidence="1">
    <location>
        <position position="213"/>
    </location>
    <ligand>
        <name>Zn(2+)</name>
        <dbReference type="ChEBI" id="CHEBI:29105"/>
    </ligand>
</feature>
<feature type="binding site" evidence="1">
    <location>
        <position position="238"/>
    </location>
    <ligand>
        <name>Zn(2+)</name>
        <dbReference type="ChEBI" id="CHEBI:29105"/>
    </ligand>
</feature>
<feature type="binding site" evidence="1">
    <location>
        <position position="242"/>
    </location>
    <ligand>
        <name>Zn(2+)</name>
        <dbReference type="ChEBI" id="CHEBI:29105"/>
    </ligand>
</feature>
<feature type="binding site" evidence="1">
    <location>
        <position position="273"/>
    </location>
    <ligand>
        <name>ATP</name>
        <dbReference type="ChEBI" id="CHEBI:30616"/>
    </ligand>
</feature>
<reference key="1">
    <citation type="journal article" date="2000" name="Nucleic Acids Res.">
        <title>Genome sequences of Chlamydia trachomatis MoPn and Chlamydia pneumoniae AR39.</title>
        <authorList>
            <person name="Read T.D."/>
            <person name="Brunham R.C."/>
            <person name="Shen C."/>
            <person name="Gill S.R."/>
            <person name="Heidelberg J.F."/>
            <person name="White O."/>
            <person name="Hickey E.K."/>
            <person name="Peterson J.D."/>
            <person name="Utterback T.R."/>
            <person name="Berry K.J."/>
            <person name="Bass S."/>
            <person name="Linher K.D."/>
            <person name="Weidman J.F."/>
            <person name="Khouri H.M."/>
            <person name="Craven B."/>
            <person name="Bowman C."/>
            <person name="Dodson R.J."/>
            <person name="Gwinn M.L."/>
            <person name="Nelson W.C."/>
            <person name="DeBoy R.T."/>
            <person name="Kolonay J.F."/>
            <person name="McClarty G."/>
            <person name="Salzberg S.L."/>
            <person name="Eisen J.A."/>
            <person name="Fraser C.M."/>
        </authorList>
    </citation>
    <scope>NUCLEOTIDE SEQUENCE [LARGE SCALE GENOMIC DNA]</scope>
    <source>
        <strain>MoPn / Nigg</strain>
    </source>
</reference>
<proteinExistence type="inferred from homology"/>
<accession>Q9PLE0</accession>
<sequence length="475" mass="54634">MDLFLYNTLSREKERFLPSNDPVKLYTCGPTVYDYAHIGNFRTYVFEDLLKRVLLFLGYSVHHVMNITDVDDKTLAGARKKGCSLEKYCQPYINAFFADLETLHILKADAYPHATHYIPQMIEAIQQLIDQGIAYVGQDQSVYFSISRFPNYGSLSHLNLEELRQSSRIDADEYDKDNLCDFVLWKAYDPNRDGEIFWESPFGKGRPGWHLECSIMSMALLGQSLDIHAGGVDNIFPHHENEIAQSESLSRKPFVRYWLHSHHLLVDGKKMSKSLGNFFTLRDLLQQGFSGEEVRYLLLQGHYRTQLNFTQEGLQAARQSLKRLRDFISRLEDPFYPDDIIHPEVGSACQNFLEAFVTSITNDLNISSALASLFDFIRKINGMIDRQSIQEETSSEFSKQDAQHILSLLRQIDQVLGVLPFSQADIPEDVLLLVKEREAARKVKNWKEADRLRDEIISRGFAIEDGKTGMKVKKI</sequence>
<protein>
    <recommendedName>
        <fullName>Cysteine--tRNA ligase</fullName>
        <ecNumber>6.1.1.16</ecNumber>
    </recommendedName>
    <alternativeName>
        <fullName>Cysteinyl-tRNA synthetase</fullName>
        <shortName>CysRS</shortName>
    </alternativeName>
</protein>
<name>SYC_CHLMU</name>
<organism>
    <name type="scientific">Chlamydia muridarum (strain MoPn / Nigg)</name>
    <dbReference type="NCBI Taxonomy" id="243161"/>
    <lineage>
        <taxon>Bacteria</taxon>
        <taxon>Pseudomonadati</taxon>
        <taxon>Chlamydiota</taxon>
        <taxon>Chlamydiia</taxon>
        <taxon>Chlamydiales</taxon>
        <taxon>Chlamydiaceae</taxon>
        <taxon>Chlamydia/Chlamydophila group</taxon>
        <taxon>Chlamydia</taxon>
    </lineage>
</organism>
<comment type="catalytic activity">
    <reaction>
        <text>tRNA(Cys) + L-cysteine + ATP = L-cysteinyl-tRNA(Cys) + AMP + diphosphate</text>
        <dbReference type="Rhea" id="RHEA:17773"/>
        <dbReference type="Rhea" id="RHEA-COMP:9661"/>
        <dbReference type="Rhea" id="RHEA-COMP:9679"/>
        <dbReference type="ChEBI" id="CHEBI:30616"/>
        <dbReference type="ChEBI" id="CHEBI:33019"/>
        <dbReference type="ChEBI" id="CHEBI:35235"/>
        <dbReference type="ChEBI" id="CHEBI:78442"/>
        <dbReference type="ChEBI" id="CHEBI:78517"/>
        <dbReference type="ChEBI" id="CHEBI:456215"/>
        <dbReference type="EC" id="6.1.1.16"/>
    </reaction>
</comment>
<comment type="cofactor">
    <cofactor evidence="1">
        <name>Zn(2+)</name>
        <dbReference type="ChEBI" id="CHEBI:29105"/>
    </cofactor>
    <text evidence="1">Binds 1 zinc ion per subunit.</text>
</comment>
<comment type="subunit">
    <text evidence="1">Monomer.</text>
</comment>
<comment type="subcellular location">
    <subcellularLocation>
        <location evidence="1">Cytoplasm</location>
    </subcellularLocation>
</comment>
<comment type="similarity">
    <text evidence="2">Belongs to the class-I aminoacyl-tRNA synthetase family.</text>
</comment>
<gene>
    <name type="primary">cysS</name>
    <name type="ordered locus">TC_0164</name>
</gene>
<evidence type="ECO:0000250" key="1"/>
<evidence type="ECO:0000305" key="2"/>
<dbReference type="EC" id="6.1.1.16"/>
<dbReference type="EMBL" id="AE002160">
    <property type="protein sequence ID" value="AAF39040.1"/>
    <property type="molecule type" value="Genomic_DNA"/>
</dbReference>
<dbReference type="PIR" id="A81735">
    <property type="entry name" value="A81735"/>
</dbReference>
<dbReference type="SMR" id="Q9PLE0"/>
<dbReference type="KEGG" id="cmu:TC_0164"/>
<dbReference type="eggNOG" id="COG0215">
    <property type="taxonomic scope" value="Bacteria"/>
</dbReference>
<dbReference type="HOGENOM" id="CLU_013528_0_1_0"/>
<dbReference type="Proteomes" id="UP000000800">
    <property type="component" value="Chromosome"/>
</dbReference>
<dbReference type="GO" id="GO:0005829">
    <property type="term" value="C:cytosol"/>
    <property type="evidence" value="ECO:0007669"/>
    <property type="project" value="TreeGrafter"/>
</dbReference>
<dbReference type="GO" id="GO:0005524">
    <property type="term" value="F:ATP binding"/>
    <property type="evidence" value="ECO:0007669"/>
    <property type="project" value="UniProtKB-UniRule"/>
</dbReference>
<dbReference type="GO" id="GO:0004817">
    <property type="term" value="F:cysteine-tRNA ligase activity"/>
    <property type="evidence" value="ECO:0007669"/>
    <property type="project" value="UniProtKB-UniRule"/>
</dbReference>
<dbReference type="GO" id="GO:0008270">
    <property type="term" value="F:zinc ion binding"/>
    <property type="evidence" value="ECO:0007669"/>
    <property type="project" value="UniProtKB-UniRule"/>
</dbReference>
<dbReference type="GO" id="GO:0006423">
    <property type="term" value="P:cysteinyl-tRNA aminoacylation"/>
    <property type="evidence" value="ECO:0007669"/>
    <property type="project" value="UniProtKB-UniRule"/>
</dbReference>
<dbReference type="CDD" id="cd00672">
    <property type="entry name" value="CysRS_core"/>
    <property type="match status" value="1"/>
</dbReference>
<dbReference type="FunFam" id="1.20.120.1910:FF:000018">
    <property type="entry name" value="Cysteine--tRNA ligase"/>
    <property type="match status" value="1"/>
</dbReference>
<dbReference type="FunFam" id="3.40.50.620:FF:000130">
    <property type="entry name" value="Cysteine--tRNA ligase"/>
    <property type="match status" value="1"/>
</dbReference>
<dbReference type="Gene3D" id="1.20.120.1910">
    <property type="entry name" value="Cysteine-tRNA ligase, C-terminal anti-codon recognition domain"/>
    <property type="match status" value="1"/>
</dbReference>
<dbReference type="Gene3D" id="3.40.50.620">
    <property type="entry name" value="HUPs"/>
    <property type="match status" value="1"/>
</dbReference>
<dbReference type="HAMAP" id="MF_00041">
    <property type="entry name" value="Cys_tRNA_synth"/>
    <property type="match status" value="1"/>
</dbReference>
<dbReference type="InterPro" id="IPR015803">
    <property type="entry name" value="Cys-tRNA-ligase"/>
</dbReference>
<dbReference type="InterPro" id="IPR015273">
    <property type="entry name" value="Cys-tRNA-synt_Ia_DALR"/>
</dbReference>
<dbReference type="InterPro" id="IPR024909">
    <property type="entry name" value="Cys-tRNA/MSH_ligase"/>
</dbReference>
<dbReference type="InterPro" id="IPR056411">
    <property type="entry name" value="CysS_C"/>
</dbReference>
<dbReference type="InterPro" id="IPR014729">
    <property type="entry name" value="Rossmann-like_a/b/a_fold"/>
</dbReference>
<dbReference type="InterPro" id="IPR032678">
    <property type="entry name" value="tRNA-synt_1_cat_dom"/>
</dbReference>
<dbReference type="InterPro" id="IPR009080">
    <property type="entry name" value="tRNAsynth_Ia_anticodon-bd"/>
</dbReference>
<dbReference type="NCBIfam" id="TIGR00435">
    <property type="entry name" value="cysS"/>
    <property type="match status" value="1"/>
</dbReference>
<dbReference type="PANTHER" id="PTHR10890:SF3">
    <property type="entry name" value="CYSTEINE--TRNA LIGASE, CYTOPLASMIC"/>
    <property type="match status" value="1"/>
</dbReference>
<dbReference type="PANTHER" id="PTHR10890">
    <property type="entry name" value="CYSTEINYL-TRNA SYNTHETASE"/>
    <property type="match status" value="1"/>
</dbReference>
<dbReference type="Pfam" id="PF23493">
    <property type="entry name" value="CysS_C"/>
    <property type="match status" value="1"/>
</dbReference>
<dbReference type="Pfam" id="PF09190">
    <property type="entry name" value="DALR_2"/>
    <property type="match status" value="1"/>
</dbReference>
<dbReference type="Pfam" id="PF01406">
    <property type="entry name" value="tRNA-synt_1e"/>
    <property type="match status" value="1"/>
</dbReference>
<dbReference type="PRINTS" id="PR00983">
    <property type="entry name" value="TRNASYNTHCYS"/>
</dbReference>
<dbReference type="SMART" id="SM00840">
    <property type="entry name" value="DALR_2"/>
    <property type="match status" value="1"/>
</dbReference>
<dbReference type="SUPFAM" id="SSF47323">
    <property type="entry name" value="Anticodon-binding domain of a subclass of class I aminoacyl-tRNA synthetases"/>
    <property type="match status" value="1"/>
</dbReference>
<dbReference type="SUPFAM" id="SSF52374">
    <property type="entry name" value="Nucleotidylyl transferase"/>
    <property type="match status" value="1"/>
</dbReference>